<feature type="chain" id="PRO_0000224366" description="DNA mismatch repair protein MutS">
    <location>
        <begin position="1"/>
        <end position="858"/>
    </location>
</feature>
<feature type="binding site" evidence="1">
    <location>
        <begin position="613"/>
        <end position="620"/>
    </location>
    <ligand>
        <name>ATP</name>
        <dbReference type="ChEBI" id="CHEBI:30616"/>
    </ligand>
</feature>
<keyword id="KW-0067">ATP-binding</keyword>
<keyword id="KW-0227">DNA damage</keyword>
<keyword id="KW-0234">DNA repair</keyword>
<keyword id="KW-0238">DNA-binding</keyword>
<keyword id="KW-0547">Nucleotide-binding</keyword>
<sequence>MENTTPLRKQYLDIKKNYPEAIVFFRLGDFYETFEEDARIAARELEIVLTSREMGKGLKVPLAGIPYHALDNYLSRLINKGYKVAICEQVTKPGETKGLVQRQVTRLVTPGTVVEPNLLQTKQNNFLLSLYLTEDSCGLAFADISTSEFGCTQTNISELEAEISRLSPAEIILPKNQSLNLPIHLKATISKLDGYYFEADIARERLLRHFECQNLSAYGCENMPLAISAAGALLNYLEETQKSSLKQLERLSVYTTADYMQMDSHTLSNLEIFRSSGGNSLKGSLLGILDQTKTAMGGRLLRKFLGQPLLKQSDIEKRLSAVDYFFEESLARTSLAKSLGQIADMERMANRIRQKTILPRELISLKNSLETVSAIHRQFGLMPPPRLAYFLNGLKPLPEMLDIINKTITDDPPSTLGDGKVIRAGFDPEMDKLCSLAGDARTFLSQMETRERERTGIKSLKLGYNRVFGYYIEISNANLGDVPPEFIRKQTLVNAERFITPELKEYENLILNAKERLLEMETGLYEQVLNQLGGFYSALLANATALAALDVLSAFAEVAVRNSYVRPVFHPENRLDIRKGRHPMVEQGLGYGSFVANDISLSAEDCQIIILTGPNMAGKSTYLKQTALIVLMAQIGSYVPAETAELCLTDRIFTRIGAREDLSAGQSTFMVEMVETASILNTATSRSLLILDEIGRGTSTYDGLAIAQAVVEYIHSQPSLTAKTLFATHYHELVELASYLPRVKNYNIAVSEDRGEVVFLHKIVPGGVDKSYGIHVAKLAGLPKWVIKRAYEVLTELENPAKKQPKSRTCQSQLQLPMTGQTSVLEEEIKELEIESLTPLAALNKLYELKKKAEEQGL</sequence>
<comment type="function">
    <text evidence="1">This protein is involved in the repair of mismatches in DNA. It is possible that it carries out the mismatch recognition step. This protein has a weak ATPase activity.</text>
</comment>
<comment type="similarity">
    <text evidence="1">Belongs to the DNA mismatch repair MutS family.</text>
</comment>
<evidence type="ECO:0000255" key="1">
    <source>
        <dbReference type="HAMAP-Rule" id="MF_00096"/>
    </source>
</evidence>
<organism>
    <name type="scientific">Dehalococcoides mccartyi (strain CBDB1)</name>
    <dbReference type="NCBI Taxonomy" id="255470"/>
    <lineage>
        <taxon>Bacteria</taxon>
        <taxon>Bacillati</taxon>
        <taxon>Chloroflexota</taxon>
        <taxon>Dehalococcoidia</taxon>
        <taxon>Dehalococcoidales</taxon>
        <taxon>Dehalococcoidaceae</taxon>
        <taxon>Dehalococcoides</taxon>
    </lineage>
</organism>
<gene>
    <name evidence="1" type="primary">mutS</name>
    <name type="ordered locus">cbdbA1137</name>
</gene>
<reference key="1">
    <citation type="journal article" date="2005" name="Nat. Biotechnol.">
        <title>Genome sequence of the chlorinated compound-respiring bacterium Dehalococcoides species strain CBDB1.</title>
        <authorList>
            <person name="Kube M."/>
            <person name="Beck A."/>
            <person name="Zinder S.H."/>
            <person name="Kuhl H."/>
            <person name="Reinhardt R."/>
            <person name="Adrian L."/>
        </authorList>
    </citation>
    <scope>NUCLEOTIDE SEQUENCE [LARGE SCALE GENOMIC DNA]</scope>
    <source>
        <strain>CBDB1</strain>
    </source>
</reference>
<protein>
    <recommendedName>
        <fullName evidence="1">DNA mismatch repair protein MutS</fullName>
    </recommendedName>
</protein>
<proteinExistence type="inferred from homology"/>
<accession>Q3ZYA0</accession>
<dbReference type="EMBL" id="AJ965256">
    <property type="protein sequence ID" value="CAI83231.1"/>
    <property type="molecule type" value="Genomic_DNA"/>
</dbReference>
<dbReference type="RefSeq" id="WP_011309582.1">
    <property type="nucleotide sequence ID" value="NC_007356.1"/>
</dbReference>
<dbReference type="SMR" id="Q3ZYA0"/>
<dbReference type="KEGG" id="deh:cbdbA1137"/>
<dbReference type="HOGENOM" id="CLU_002472_4_0_0"/>
<dbReference type="Proteomes" id="UP000000433">
    <property type="component" value="Chromosome"/>
</dbReference>
<dbReference type="GO" id="GO:0005829">
    <property type="term" value="C:cytosol"/>
    <property type="evidence" value="ECO:0007669"/>
    <property type="project" value="TreeGrafter"/>
</dbReference>
<dbReference type="GO" id="GO:0005524">
    <property type="term" value="F:ATP binding"/>
    <property type="evidence" value="ECO:0007669"/>
    <property type="project" value="UniProtKB-UniRule"/>
</dbReference>
<dbReference type="GO" id="GO:0140664">
    <property type="term" value="F:ATP-dependent DNA damage sensor activity"/>
    <property type="evidence" value="ECO:0007669"/>
    <property type="project" value="InterPro"/>
</dbReference>
<dbReference type="GO" id="GO:0003684">
    <property type="term" value="F:damaged DNA binding"/>
    <property type="evidence" value="ECO:0007669"/>
    <property type="project" value="UniProtKB-UniRule"/>
</dbReference>
<dbReference type="GO" id="GO:0030983">
    <property type="term" value="F:mismatched DNA binding"/>
    <property type="evidence" value="ECO:0007669"/>
    <property type="project" value="InterPro"/>
</dbReference>
<dbReference type="GO" id="GO:0006298">
    <property type="term" value="P:mismatch repair"/>
    <property type="evidence" value="ECO:0007669"/>
    <property type="project" value="UniProtKB-UniRule"/>
</dbReference>
<dbReference type="CDD" id="cd03284">
    <property type="entry name" value="ABC_MutS1"/>
    <property type="match status" value="1"/>
</dbReference>
<dbReference type="FunFam" id="3.40.1170.10:FF:000001">
    <property type="entry name" value="DNA mismatch repair protein MutS"/>
    <property type="match status" value="1"/>
</dbReference>
<dbReference type="FunFam" id="3.40.50.300:FF:000870">
    <property type="entry name" value="MutS protein homolog 4"/>
    <property type="match status" value="1"/>
</dbReference>
<dbReference type="Gene3D" id="1.10.1420.10">
    <property type="match status" value="2"/>
</dbReference>
<dbReference type="Gene3D" id="3.40.1170.10">
    <property type="entry name" value="DNA repair protein MutS, domain I"/>
    <property type="match status" value="1"/>
</dbReference>
<dbReference type="Gene3D" id="3.30.420.110">
    <property type="entry name" value="MutS, connector domain"/>
    <property type="match status" value="1"/>
</dbReference>
<dbReference type="Gene3D" id="3.40.50.300">
    <property type="entry name" value="P-loop containing nucleotide triphosphate hydrolases"/>
    <property type="match status" value="1"/>
</dbReference>
<dbReference type="HAMAP" id="MF_00096">
    <property type="entry name" value="MutS"/>
    <property type="match status" value="1"/>
</dbReference>
<dbReference type="InterPro" id="IPR005748">
    <property type="entry name" value="DNA_mismatch_repair_MutS"/>
</dbReference>
<dbReference type="InterPro" id="IPR007695">
    <property type="entry name" value="DNA_mismatch_repair_MutS-lik_N"/>
</dbReference>
<dbReference type="InterPro" id="IPR017261">
    <property type="entry name" value="DNA_mismatch_repair_MutS/MSH"/>
</dbReference>
<dbReference type="InterPro" id="IPR000432">
    <property type="entry name" value="DNA_mismatch_repair_MutS_C"/>
</dbReference>
<dbReference type="InterPro" id="IPR007861">
    <property type="entry name" value="DNA_mismatch_repair_MutS_clamp"/>
</dbReference>
<dbReference type="InterPro" id="IPR007696">
    <property type="entry name" value="DNA_mismatch_repair_MutS_core"/>
</dbReference>
<dbReference type="InterPro" id="IPR016151">
    <property type="entry name" value="DNA_mismatch_repair_MutS_N"/>
</dbReference>
<dbReference type="InterPro" id="IPR036187">
    <property type="entry name" value="DNA_mismatch_repair_MutS_sf"/>
</dbReference>
<dbReference type="InterPro" id="IPR007860">
    <property type="entry name" value="DNA_mmatch_repair_MutS_con_dom"/>
</dbReference>
<dbReference type="InterPro" id="IPR045076">
    <property type="entry name" value="MutS"/>
</dbReference>
<dbReference type="InterPro" id="IPR036678">
    <property type="entry name" value="MutS_con_dom_sf"/>
</dbReference>
<dbReference type="InterPro" id="IPR027417">
    <property type="entry name" value="P-loop_NTPase"/>
</dbReference>
<dbReference type="NCBIfam" id="TIGR01070">
    <property type="entry name" value="mutS1"/>
    <property type="match status" value="1"/>
</dbReference>
<dbReference type="NCBIfam" id="NF003810">
    <property type="entry name" value="PRK05399.1"/>
    <property type="match status" value="1"/>
</dbReference>
<dbReference type="PANTHER" id="PTHR11361:SF34">
    <property type="entry name" value="DNA MISMATCH REPAIR PROTEIN MSH1, MITOCHONDRIAL"/>
    <property type="match status" value="1"/>
</dbReference>
<dbReference type="PANTHER" id="PTHR11361">
    <property type="entry name" value="DNA MISMATCH REPAIR PROTEIN MUTS FAMILY MEMBER"/>
    <property type="match status" value="1"/>
</dbReference>
<dbReference type="Pfam" id="PF01624">
    <property type="entry name" value="MutS_I"/>
    <property type="match status" value="1"/>
</dbReference>
<dbReference type="Pfam" id="PF05188">
    <property type="entry name" value="MutS_II"/>
    <property type="match status" value="1"/>
</dbReference>
<dbReference type="Pfam" id="PF05192">
    <property type="entry name" value="MutS_III"/>
    <property type="match status" value="1"/>
</dbReference>
<dbReference type="Pfam" id="PF05190">
    <property type="entry name" value="MutS_IV"/>
    <property type="match status" value="1"/>
</dbReference>
<dbReference type="Pfam" id="PF00488">
    <property type="entry name" value="MutS_V"/>
    <property type="match status" value="1"/>
</dbReference>
<dbReference type="PIRSF" id="PIRSF037677">
    <property type="entry name" value="DNA_mis_repair_Msh6"/>
    <property type="match status" value="1"/>
</dbReference>
<dbReference type="SMART" id="SM00534">
    <property type="entry name" value="MUTSac"/>
    <property type="match status" value="1"/>
</dbReference>
<dbReference type="SMART" id="SM00533">
    <property type="entry name" value="MUTSd"/>
    <property type="match status" value="1"/>
</dbReference>
<dbReference type="SUPFAM" id="SSF55271">
    <property type="entry name" value="DNA repair protein MutS, domain I"/>
    <property type="match status" value="1"/>
</dbReference>
<dbReference type="SUPFAM" id="SSF53150">
    <property type="entry name" value="DNA repair protein MutS, domain II"/>
    <property type="match status" value="1"/>
</dbReference>
<dbReference type="SUPFAM" id="SSF48334">
    <property type="entry name" value="DNA repair protein MutS, domain III"/>
    <property type="match status" value="1"/>
</dbReference>
<dbReference type="SUPFAM" id="SSF52540">
    <property type="entry name" value="P-loop containing nucleoside triphosphate hydrolases"/>
    <property type="match status" value="1"/>
</dbReference>
<dbReference type="PROSITE" id="PS00486">
    <property type="entry name" value="DNA_MISMATCH_REPAIR_2"/>
    <property type="match status" value="1"/>
</dbReference>
<name>MUTS_DEHMC</name>